<dbReference type="EMBL" id="AE005674">
    <property type="protein sequence ID" value="AAN45647.2"/>
    <property type="molecule type" value="Genomic_DNA"/>
</dbReference>
<dbReference type="EMBL" id="AE014073">
    <property type="protein sequence ID" value="AAP19435.1"/>
    <property type="molecule type" value="Genomic_DNA"/>
</dbReference>
<dbReference type="RefSeq" id="WP_000584114.1">
    <property type="nucleotide sequence ID" value="NZ_WPGW01000110.1"/>
</dbReference>
<dbReference type="PDB" id="6S8G">
    <property type="method" value="EM"/>
    <property type="resolution" value="3.50 A"/>
    <property type="chains" value="F=1-366"/>
</dbReference>
<dbReference type="PDB" id="6S8H">
    <property type="method" value="EM"/>
    <property type="resolution" value="3.70 A"/>
    <property type="chains" value="F=1-366"/>
</dbReference>
<dbReference type="PDB" id="6S8N">
    <property type="method" value="EM"/>
    <property type="resolution" value="3.10 A"/>
    <property type="chains" value="F=1-366"/>
</dbReference>
<dbReference type="PDBsum" id="6S8G"/>
<dbReference type="PDBsum" id="6S8H"/>
<dbReference type="PDBsum" id="6S8N"/>
<dbReference type="EMDB" id="EMD-10122"/>
<dbReference type="EMDB" id="EMD-10125"/>
<dbReference type="SMR" id="P0AFA1"/>
<dbReference type="STRING" id="198214.SF4228"/>
<dbReference type="PaxDb" id="198214-SF4228"/>
<dbReference type="GeneID" id="75203518"/>
<dbReference type="KEGG" id="sfl:SF4228"/>
<dbReference type="KEGG" id="sfx:S4489"/>
<dbReference type="PATRIC" id="fig|198214.7.peg.4987"/>
<dbReference type="HOGENOM" id="CLU_028799_0_2_6"/>
<dbReference type="Proteomes" id="UP000001006">
    <property type="component" value="Chromosome"/>
</dbReference>
<dbReference type="Proteomes" id="UP000002673">
    <property type="component" value="Chromosome"/>
</dbReference>
<dbReference type="GO" id="GO:0043190">
    <property type="term" value="C:ATP-binding cassette (ABC) transporter complex"/>
    <property type="evidence" value="ECO:0007669"/>
    <property type="project" value="InterPro"/>
</dbReference>
<dbReference type="GO" id="GO:0015920">
    <property type="term" value="P:lipopolysaccharide transport"/>
    <property type="evidence" value="ECO:0007669"/>
    <property type="project" value="TreeGrafter"/>
</dbReference>
<dbReference type="GO" id="GO:0055085">
    <property type="term" value="P:transmembrane transport"/>
    <property type="evidence" value="ECO:0007669"/>
    <property type="project" value="InterPro"/>
</dbReference>
<dbReference type="InterPro" id="IPR030922">
    <property type="entry name" value="LptF"/>
</dbReference>
<dbReference type="InterPro" id="IPR005495">
    <property type="entry name" value="LptG/LptF_permease"/>
</dbReference>
<dbReference type="NCBIfam" id="TIGR04407">
    <property type="entry name" value="LptF_YjgP"/>
    <property type="match status" value="1"/>
</dbReference>
<dbReference type="PANTHER" id="PTHR33529:SF7">
    <property type="entry name" value="LIPOPOLYSACCHARIDE EXPORT SYSTEM PERMEASE PROTEIN LPTF"/>
    <property type="match status" value="1"/>
</dbReference>
<dbReference type="PANTHER" id="PTHR33529">
    <property type="entry name" value="SLR0882 PROTEIN-RELATED"/>
    <property type="match status" value="1"/>
</dbReference>
<dbReference type="Pfam" id="PF03739">
    <property type="entry name" value="LptF_LptG"/>
    <property type="match status" value="1"/>
</dbReference>
<sequence length="366" mass="40358">MIIIRYLVRETLKSQLAILFILLLIFFCQKLVRILGAAVDGDIPANLVLSLLGLGVPEMAQLILPLSLFLGLLMTLGKLYTESEITVMHACGLSKAVLVKAAMILAVFTAIVAAVNVMWAGPWSSRHQDEVLAEAKANPGMAALAQGQFQQATNGSSVLFIESVDGSDFKDVFLAQIRPKGNARPSVVVADSGHLTQLRDGSQVVTLNQGTRFEGTALLRDFRITDFQDYQAIIGHQAVALDPNDTDQMDMRTLWNTDTDRARAELNWRITLVFTVFMMALMVVPLSVVNPRQGRVLSMLPAMLLYLLFFLIQTSLKSNGGKGKLDPTLWMWTVNLIYLALAIVLNLWDTVPVRRLRASFSRKGAV</sequence>
<feature type="chain" id="PRO_0000169774" description="Lipopolysaccharide export system permease protein LptF">
    <location>
        <begin position="1"/>
        <end position="366"/>
    </location>
</feature>
<feature type="topological domain" description="Cytoplasmic" evidence="2">
    <location>
        <begin position="1"/>
        <end position="15"/>
    </location>
</feature>
<feature type="transmembrane region" description="Helical" evidence="2">
    <location>
        <begin position="16"/>
        <end position="36"/>
    </location>
</feature>
<feature type="topological domain" description="Periplasmic" evidence="2">
    <location>
        <begin position="37"/>
        <end position="53"/>
    </location>
</feature>
<feature type="transmembrane region" description="Helical" evidence="2">
    <location>
        <begin position="54"/>
        <end position="74"/>
    </location>
</feature>
<feature type="topological domain" description="Cytoplasmic" evidence="2">
    <location>
        <begin position="75"/>
        <end position="100"/>
    </location>
</feature>
<feature type="transmembrane region" description="Helical" evidence="2">
    <location>
        <begin position="101"/>
        <end position="121"/>
    </location>
</feature>
<feature type="topological domain" description="Periplasmic" evidence="2">
    <location>
        <begin position="122"/>
        <end position="269"/>
    </location>
</feature>
<feature type="transmembrane region" description="Helical" evidence="2">
    <location>
        <begin position="270"/>
        <end position="290"/>
    </location>
</feature>
<feature type="topological domain" description="Cytoplasmic" evidence="2">
    <location>
        <begin position="291"/>
        <end position="295"/>
    </location>
</feature>
<feature type="transmembrane region" description="Helical" evidence="2">
    <location>
        <begin position="296"/>
        <end position="316"/>
    </location>
</feature>
<feature type="topological domain" description="Periplasmic" evidence="2">
    <location>
        <begin position="317"/>
        <end position="327"/>
    </location>
</feature>
<feature type="transmembrane region" description="Helical" evidence="2">
    <location>
        <begin position="328"/>
        <end position="348"/>
    </location>
</feature>
<feature type="topological domain" description="Cytoplasmic" evidence="2">
    <location>
        <begin position="349"/>
        <end position="366"/>
    </location>
</feature>
<feature type="helix" evidence="4">
    <location>
        <begin position="3"/>
        <end position="36"/>
    </location>
</feature>
<feature type="turn" evidence="4">
    <location>
        <begin position="37"/>
        <end position="41"/>
    </location>
</feature>
<feature type="strand" evidence="4">
    <location>
        <begin position="44"/>
        <end position="47"/>
    </location>
</feature>
<feature type="helix" evidence="4">
    <location>
        <begin position="50"/>
        <end position="53"/>
    </location>
</feature>
<feature type="helix" evidence="4">
    <location>
        <begin position="56"/>
        <end position="81"/>
    </location>
</feature>
<feature type="turn" evidence="4">
    <location>
        <begin position="82"/>
        <end position="85"/>
    </location>
</feature>
<feature type="helix" evidence="4">
    <location>
        <begin position="86"/>
        <end position="91"/>
    </location>
</feature>
<feature type="helix" evidence="4">
    <location>
        <begin position="96"/>
        <end position="109"/>
    </location>
</feature>
<feature type="turn" evidence="4">
    <location>
        <begin position="110"/>
        <end position="115"/>
    </location>
</feature>
<feature type="strand" evidence="4">
    <location>
        <begin position="116"/>
        <end position="122"/>
    </location>
</feature>
<feature type="turn" evidence="4">
    <location>
        <begin position="123"/>
        <end position="132"/>
    </location>
</feature>
<feature type="strand" evidence="4">
    <location>
        <begin position="261"/>
        <end position="263"/>
    </location>
</feature>
<feature type="helix" evidence="4">
    <location>
        <begin position="267"/>
        <end position="281"/>
    </location>
</feature>
<feature type="strand" evidence="4">
    <location>
        <begin position="282"/>
        <end position="286"/>
    </location>
</feature>
<feature type="turn" evidence="4">
    <location>
        <begin position="291"/>
        <end position="293"/>
    </location>
</feature>
<feature type="helix" evidence="4">
    <location>
        <begin position="297"/>
        <end position="299"/>
    </location>
</feature>
<feature type="helix" evidence="4">
    <location>
        <begin position="300"/>
        <end position="317"/>
    </location>
</feature>
<feature type="helix" evidence="4">
    <location>
        <begin position="319"/>
        <end position="322"/>
    </location>
</feature>
<feature type="helix" evidence="4">
    <location>
        <begin position="329"/>
        <end position="346"/>
    </location>
</feature>
<feature type="strand" evidence="4">
    <location>
        <begin position="349"/>
        <end position="351"/>
    </location>
</feature>
<name>LPTF_SHIFL</name>
<keyword id="KW-0002">3D-structure</keyword>
<keyword id="KW-0997">Cell inner membrane</keyword>
<keyword id="KW-1003">Cell membrane</keyword>
<keyword id="KW-0472">Membrane</keyword>
<keyword id="KW-1185">Reference proteome</keyword>
<keyword id="KW-0812">Transmembrane</keyword>
<keyword id="KW-1133">Transmembrane helix</keyword>
<keyword id="KW-0813">Transport</keyword>
<evidence type="ECO:0000250" key="1"/>
<evidence type="ECO:0000255" key="2"/>
<evidence type="ECO:0000305" key="3"/>
<evidence type="ECO:0007829" key="4">
    <source>
        <dbReference type="PDB" id="6S8N"/>
    </source>
</evidence>
<protein>
    <recommendedName>
        <fullName>Lipopolysaccharide export system permease protein LptF</fullName>
    </recommendedName>
</protein>
<reference key="1">
    <citation type="journal article" date="2002" name="Nucleic Acids Res.">
        <title>Genome sequence of Shigella flexneri 2a: insights into pathogenicity through comparison with genomes of Escherichia coli K12 and O157.</title>
        <authorList>
            <person name="Jin Q."/>
            <person name="Yuan Z."/>
            <person name="Xu J."/>
            <person name="Wang Y."/>
            <person name="Shen Y."/>
            <person name="Lu W."/>
            <person name="Wang J."/>
            <person name="Liu H."/>
            <person name="Yang J."/>
            <person name="Yang F."/>
            <person name="Zhang X."/>
            <person name="Zhang J."/>
            <person name="Yang G."/>
            <person name="Wu H."/>
            <person name="Qu D."/>
            <person name="Dong J."/>
            <person name="Sun L."/>
            <person name="Xue Y."/>
            <person name="Zhao A."/>
            <person name="Gao Y."/>
            <person name="Zhu J."/>
            <person name="Kan B."/>
            <person name="Ding K."/>
            <person name="Chen S."/>
            <person name="Cheng H."/>
            <person name="Yao Z."/>
            <person name="He B."/>
            <person name="Chen R."/>
            <person name="Ma D."/>
            <person name="Qiang B."/>
            <person name="Wen Y."/>
            <person name="Hou Y."/>
            <person name="Yu J."/>
        </authorList>
    </citation>
    <scope>NUCLEOTIDE SEQUENCE [LARGE SCALE GENOMIC DNA]</scope>
    <source>
        <strain>301 / Serotype 2a</strain>
    </source>
</reference>
<reference key="2">
    <citation type="journal article" date="2003" name="Infect. Immun.">
        <title>Complete genome sequence and comparative genomics of Shigella flexneri serotype 2a strain 2457T.</title>
        <authorList>
            <person name="Wei J."/>
            <person name="Goldberg M.B."/>
            <person name="Burland V."/>
            <person name="Venkatesan M.M."/>
            <person name="Deng W."/>
            <person name="Fournier G."/>
            <person name="Mayhew G.F."/>
            <person name="Plunkett G. III"/>
            <person name="Rose D.J."/>
            <person name="Darling A."/>
            <person name="Mau B."/>
            <person name="Perna N.T."/>
            <person name="Payne S.M."/>
            <person name="Runyen-Janecky L.J."/>
            <person name="Zhou S."/>
            <person name="Schwartz D.C."/>
            <person name="Blattner F.R."/>
        </authorList>
    </citation>
    <scope>NUCLEOTIDE SEQUENCE [LARGE SCALE GENOMIC DNA]</scope>
    <source>
        <strain>ATCC 700930 / 2457T / Serotype 2a</strain>
    </source>
</reference>
<organism>
    <name type="scientific">Shigella flexneri</name>
    <dbReference type="NCBI Taxonomy" id="623"/>
    <lineage>
        <taxon>Bacteria</taxon>
        <taxon>Pseudomonadati</taxon>
        <taxon>Pseudomonadota</taxon>
        <taxon>Gammaproteobacteria</taxon>
        <taxon>Enterobacterales</taxon>
        <taxon>Enterobacteriaceae</taxon>
        <taxon>Shigella</taxon>
    </lineage>
</organism>
<accession>P0AFA1</accession>
<accession>P39340</accession>
<comment type="function">
    <text evidence="1">Part of the ABC transporter complex LptBFG involved in the translocation of lipopolysaccharide (LPS) from the inner membrane to the outer membrane.</text>
</comment>
<comment type="subunit">
    <text evidence="1">Component of the lipopolysaccharide transport and assembly complex. The LptBFG transporter is composed of two ATP-binding proteins (LptB) and two transmembrane proteins (LptF and LptG) (By similarity).</text>
</comment>
<comment type="subcellular location">
    <subcellularLocation>
        <location evidence="1">Cell inner membrane</location>
        <topology evidence="1">Multi-pass membrane protein</topology>
    </subcellularLocation>
</comment>
<comment type="similarity">
    <text evidence="3">Belongs to the LptF/LptG family.</text>
</comment>
<gene>
    <name type="primary">lptF</name>
    <name type="ordered locus">SF4228</name>
    <name type="ordered locus">S4489</name>
</gene>
<proteinExistence type="evidence at protein level"/>